<reference key="1">
    <citation type="journal article" date="2008" name="Foodborne Pathog. Dis.">
        <title>The complete genome sequence and analysis of the human pathogen Campylobacter lari.</title>
        <authorList>
            <person name="Miller W.G."/>
            <person name="Wang G."/>
            <person name="Binnewies T.T."/>
            <person name="Parker C.T."/>
        </authorList>
    </citation>
    <scope>NUCLEOTIDE SEQUENCE [LARGE SCALE GENOMIC DNA]</scope>
    <source>
        <strain>RM2100 / D67 / ATCC BAA-1060</strain>
    </source>
</reference>
<protein>
    <recommendedName>
        <fullName evidence="1">Enolase</fullName>
        <ecNumber evidence="1">4.2.1.11</ecNumber>
    </recommendedName>
    <alternativeName>
        <fullName evidence="1">2-phospho-D-glycerate hydro-lyase</fullName>
    </alternativeName>
    <alternativeName>
        <fullName evidence="1">2-phosphoglycerate dehydratase</fullName>
    </alternativeName>
</protein>
<dbReference type="EC" id="4.2.1.11" evidence="1"/>
<dbReference type="EMBL" id="CP000932">
    <property type="protein sequence ID" value="ACM63515.1"/>
    <property type="molecule type" value="Genomic_DNA"/>
</dbReference>
<dbReference type="RefSeq" id="WP_012660900.1">
    <property type="nucleotide sequence ID" value="NC_012039.1"/>
</dbReference>
<dbReference type="SMR" id="B9KEN0"/>
<dbReference type="STRING" id="306263.Cla_0152"/>
<dbReference type="KEGG" id="cla:CLA_0152"/>
<dbReference type="PATRIC" id="fig|306263.5.peg.151"/>
<dbReference type="eggNOG" id="COG0148">
    <property type="taxonomic scope" value="Bacteria"/>
</dbReference>
<dbReference type="HOGENOM" id="CLU_031223_2_1_7"/>
<dbReference type="UniPathway" id="UPA00109">
    <property type="reaction ID" value="UER00187"/>
</dbReference>
<dbReference type="Proteomes" id="UP000007727">
    <property type="component" value="Chromosome"/>
</dbReference>
<dbReference type="GO" id="GO:0009986">
    <property type="term" value="C:cell surface"/>
    <property type="evidence" value="ECO:0007669"/>
    <property type="project" value="UniProtKB-SubCell"/>
</dbReference>
<dbReference type="GO" id="GO:0005576">
    <property type="term" value="C:extracellular region"/>
    <property type="evidence" value="ECO:0007669"/>
    <property type="project" value="UniProtKB-SubCell"/>
</dbReference>
<dbReference type="GO" id="GO:0000015">
    <property type="term" value="C:phosphopyruvate hydratase complex"/>
    <property type="evidence" value="ECO:0007669"/>
    <property type="project" value="InterPro"/>
</dbReference>
<dbReference type="GO" id="GO:0000287">
    <property type="term" value="F:magnesium ion binding"/>
    <property type="evidence" value="ECO:0007669"/>
    <property type="project" value="UniProtKB-UniRule"/>
</dbReference>
<dbReference type="GO" id="GO:0004634">
    <property type="term" value="F:phosphopyruvate hydratase activity"/>
    <property type="evidence" value="ECO:0007669"/>
    <property type="project" value="UniProtKB-UniRule"/>
</dbReference>
<dbReference type="GO" id="GO:0006096">
    <property type="term" value="P:glycolytic process"/>
    <property type="evidence" value="ECO:0007669"/>
    <property type="project" value="UniProtKB-UniRule"/>
</dbReference>
<dbReference type="CDD" id="cd03313">
    <property type="entry name" value="enolase"/>
    <property type="match status" value="1"/>
</dbReference>
<dbReference type="Gene3D" id="3.20.20.120">
    <property type="entry name" value="Enolase-like C-terminal domain"/>
    <property type="match status" value="1"/>
</dbReference>
<dbReference type="Gene3D" id="3.30.390.10">
    <property type="entry name" value="Enolase-like, N-terminal domain"/>
    <property type="match status" value="1"/>
</dbReference>
<dbReference type="HAMAP" id="MF_00318">
    <property type="entry name" value="Enolase"/>
    <property type="match status" value="1"/>
</dbReference>
<dbReference type="InterPro" id="IPR000941">
    <property type="entry name" value="Enolase"/>
</dbReference>
<dbReference type="InterPro" id="IPR036849">
    <property type="entry name" value="Enolase-like_C_sf"/>
</dbReference>
<dbReference type="InterPro" id="IPR029017">
    <property type="entry name" value="Enolase-like_N"/>
</dbReference>
<dbReference type="InterPro" id="IPR020810">
    <property type="entry name" value="Enolase_C"/>
</dbReference>
<dbReference type="InterPro" id="IPR020809">
    <property type="entry name" value="Enolase_CS"/>
</dbReference>
<dbReference type="InterPro" id="IPR020811">
    <property type="entry name" value="Enolase_N"/>
</dbReference>
<dbReference type="NCBIfam" id="TIGR01060">
    <property type="entry name" value="eno"/>
    <property type="match status" value="1"/>
</dbReference>
<dbReference type="PANTHER" id="PTHR11902">
    <property type="entry name" value="ENOLASE"/>
    <property type="match status" value="1"/>
</dbReference>
<dbReference type="PANTHER" id="PTHR11902:SF1">
    <property type="entry name" value="ENOLASE"/>
    <property type="match status" value="1"/>
</dbReference>
<dbReference type="Pfam" id="PF00113">
    <property type="entry name" value="Enolase_C"/>
    <property type="match status" value="1"/>
</dbReference>
<dbReference type="Pfam" id="PF03952">
    <property type="entry name" value="Enolase_N"/>
    <property type="match status" value="1"/>
</dbReference>
<dbReference type="PIRSF" id="PIRSF001400">
    <property type="entry name" value="Enolase"/>
    <property type="match status" value="1"/>
</dbReference>
<dbReference type="PRINTS" id="PR00148">
    <property type="entry name" value="ENOLASE"/>
</dbReference>
<dbReference type="SFLD" id="SFLDF00002">
    <property type="entry name" value="enolase"/>
    <property type="match status" value="1"/>
</dbReference>
<dbReference type="SFLD" id="SFLDG00178">
    <property type="entry name" value="enolase"/>
    <property type="match status" value="1"/>
</dbReference>
<dbReference type="SMART" id="SM01192">
    <property type="entry name" value="Enolase_C"/>
    <property type="match status" value="1"/>
</dbReference>
<dbReference type="SMART" id="SM01193">
    <property type="entry name" value="Enolase_N"/>
    <property type="match status" value="1"/>
</dbReference>
<dbReference type="SUPFAM" id="SSF51604">
    <property type="entry name" value="Enolase C-terminal domain-like"/>
    <property type="match status" value="1"/>
</dbReference>
<dbReference type="SUPFAM" id="SSF54826">
    <property type="entry name" value="Enolase N-terminal domain-like"/>
    <property type="match status" value="1"/>
</dbReference>
<dbReference type="PROSITE" id="PS00164">
    <property type="entry name" value="ENOLASE"/>
    <property type="match status" value="1"/>
</dbReference>
<evidence type="ECO:0000255" key="1">
    <source>
        <dbReference type="HAMAP-Rule" id="MF_00318"/>
    </source>
</evidence>
<organism>
    <name type="scientific">Campylobacter lari (strain RM2100 / D67 / ATCC BAA-1060)</name>
    <dbReference type="NCBI Taxonomy" id="306263"/>
    <lineage>
        <taxon>Bacteria</taxon>
        <taxon>Pseudomonadati</taxon>
        <taxon>Campylobacterota</taxon>
        <taxon>Epsilonproteobacteria</taxon>
        <taxon>Campylobacterales</taxon>
        <taxon>Campylobacteraceae</taxon>
        <taxon>Campylobacter</taxon>
    </lineage>
</organism>
<sequence>MLIIEDLRAFEVLDSRGNPTIKAEIMLSDGSMGSAIVPSGASTGKKEALELRDNDERFGGKGVLKAIENINGTIAENIIGLDAFNQTQLDNTLLELDGTKNYSNLGANATLGISMATARAAANALGIPLYRYLGGANASVLPVPMCNIINGGAHANNNVDFQEFMIMPFGFSSFKEGLRSVCEIYAILKKELAALGYSTALGDEGGFAPNLANNTEPLDLLMTCIKKAGYENKIKLALDVASSELYKDGKYYLEGKVFSNEDLIARYEELCAKYPIFSIEDGLAEDDYEGWIKLTQKLGNKIQLVGDDLFVTNEDILREGILKNMANAVLIKPNQIGTITQTMRTVRLAHRNNYRCIMSHRSGESEDAFIADFAVALNTGQIKTGALARGERTAKYNRLLEIELDNDEYLGDKL</sequence>
<accession>B9KEN0</accession>
<keyword id="KW-0963">Cytoplasm</keyword>
<keyword id="KW-0324">Glycolysis</keyword>
<keyword id="KW-0456">Lyase</keyword>
<keyword id="KW-0460">Magnesium</keyword>
<keyword id="KW-0479">Metal-binding</keyword>
<keyword id="KW-1185">Reference proteome</keyword>
<keyword id="KW-0964">Secreted</keyword>
<comment type="function">
    <text evidence="1">Catalyzes the reversible conversion of 2-phosphoglycerate (2-PG) into phosphoenolpyruvate (PEP). It is essential for the degradation of carbohydrates via glycolysis.</text>
</comment>
<comment type="catalytic activity">
    <reaction evidence="1">
        <text>(2R)-2-phosphoglycerate = phosphoenolpyruvate + H2O</text>
        <dbReference type="Rhea" id="RHEA:10164"/>
        <dbReference type="ChEBI" id="CHEBI:15377"/>
        <dbReference type="ChEBI" id="CHEBI:58289"/>
        <dbReference type="ChEBI" id="CHEBI:58702"/>
        <dbReference type="EC" id="4.2.1.11"/>
    </reaction>
</comment>
<comment type="cofactor">
    <cofactor evidence="1">
        <name>Mg(2+)</name>
        <dbReference type="ChEBI" id="CHEBI:18420"/>
    </cofactor>
    <text evidence="1">Binds a second Mg(2+) ion via substrate during catalysis.</text>
</comment>
<comment type="pathway">
    <text evidence="1">Carbohydrate degradation; glycolysis; pyruvate from D-glyceraldehyde 3-phosphate: step 4/5.</text>
</comment>
<comment type="subcellular location">
    <subcellularLocation>
        <location evidence="1">Cytoplasm</location>
    </subcellularLocation>
    <subcellularLocation>
        <location evidence="1">Secreted</location>
    </subcellularLocation>
    <subcellularLocation>
        <location evidence="1">Cell surface</location>
    </subcellularLocation>
    <text evidence="1">Fractions of enolase are present in both the cytoplasm and on the cell surface.</text>
</comment>
<comment type="similarity">
    <text evidence="1">Belongs to the enolase family.</text>
</comment>
<name>ENO_CAMLR</name>
<gene>
    <name evidence="1" type="primary">eno</name>
    <name type="ordered locus">Cla_0152</name>
</gene>
<feature type="chain" id="PRO_1000132991" description="Enolase">
    <location>
        <begin position="1"/>
        <end position="414"/>
    </location>
</feature>
<feature type="active site" description="Proton donor" evidence="1">
    <location>
        <position position="204"/>
    </location>
</feature>
<feature type="active site" description="Proton acceptor" evidence="1">
    <location>
        <position position="332"/>
    </location>
</feature>
<feature type="binding site" evidence="1">
    <location>
        <position position="162"/>
    </location>
    <ligand>
        <name>(2R)-2-phosphoglycerate</name>
        <dbReference type="ChEBI" id="CHEBI:58289"/>
    </ligand>
</feature>
<feature type="binding site" evidence="1">
    <location>
        <position position="239"/>
    </location>
    <ligand>
        <name>Mg(2+)</name>
        <dbReference type="ChEBI" id="CHEBI:18420"/>
    </ligand>
</feature>
<feature type="binding site" evidence="1">
    <location>
        <position position="280"/>
    </location>
    <ligand>
        <name>Mg(2+)</name>
        <dbReference type="ChEBI" id="CHEBI:18420"/>
    </ligand>
</feature>
<feature type="binding site" evidence="1">
    <location>
        <position position="307"/>
    </location>
    <ligand>
        <name>Mg(2+)</name>
        <dbReference type="ChEBI" id="CHEBI:18420"/>
    </ligand>
</feature>
<feature type="binding site" evidence="1">
    <location>
        <position position="332"/>
    </location>
    <ligand>
        <name>(2R)-2-phosphoglycerate</name>
        <dbReference type="ChEBI" id="CHEBI:58289"/>
    </ligand>
</feature>
<feature type="binding site" evidence="1">
    <location>
        <position position="361"/>
    </location>
    <ligand>
        <name>(2R)-2-phosphoglycerate</name>
        <dbReference type="ChEBI" id="CHEBI:58289"/>
    </ligand>
</feature>
<feature type="binding site" evidence="1">
    <location>
        <position position="362"/>
    </location>
    <ligand>
        <name>(2R)-2-phosphoglycerate</name>
        <dbReference type="ChEBI" id="CHEBI:58289"/>
    </ligand>
</feature>
<feature type="binding site" evidence="1">
    <location>
        <position position="383"/>
    </location>
    <ligand>
        <name>(2R)-2-phosphoglycerate</name>
        <dbReference type="ChEBI" id="CHEBI:58289"/>
    </ligand>
</feature>
<proteinExistence type="inferred from homology"/>